<keyword id="KW-0150">Chloroplast</keyword>
<keyword id="KW-0472">Membrane</keyword>
<keyword id="KW-0602">Photosynthesis</keyword>
<keyword id="KW-0604">Photosystem II</keyword>
<keyword id="KW-0934">Plastid</keyword>
<keyword id="KW-0674">Reaction center</keyword>
<keyword id="KW-0793">Thylakoid</keyword>
<keyword id="KW-0812">Transmembrane</keyword>
<keyword id="KW-1133">Transmembrane helix</keyword>
<dbReference type="EMBL" id="AY727485">
    <property type="protein sequence ID" value="AAW56534.1"/>
    <property type="molecule type" value="Genomic_DNA"/>
</dbReference>
<dbReference type="EMBL" id="DQ899947">
    <property type="protein sequence ID" value="ABI32506.1"/>
    <property type="molecule type" value="Genomic_DNA"/>
</dbReference>
<dbReference type="RefSeq" id="YP_740199.1">
    <property type="nucleotide sequence ID" value="NC_008326.1"/>
</dbReference>
<dbReference type="SMR" id="Q5IHA9"/>
<dbReference type="GeneID" id="4266613"/>
<dbReference type="GO" id="GO:0009535">
    <property type="term" value="C:chloroplast thylakoid membrane"/>
    <property type="evidence" value="ECO:0007669"/>
    <property type="project" value="UniProtKB-SubCell"/>
</dbReference>
<dbReference type="GO" id="GO:0009539">
    <property type="term" value="C:photosystem II reaction center"/>
    <property type="evidence" value="ECO:0007669"/>
    <property type="project" value="InterPro"/>
</dbReference>
<dbReference type="GO" id="GO:0015979">
    <property type="term" value="P:photosynthesis"/>
    <property type="evidence" value="ECO:0007669"/>
    <property type="project" value="UniProtKB-UniRule"/>
</dbReference>
<dbReference type="GO" id="GO:0042549">
    <property type="term" value="P:photosystem II stabilization"/>
    <property type="evidence" value="ECO:0007669"/>
    <property type="project" value="InterPro"/>
</dbReference>
<dbReference type="FunFam" id="1.10.287.740:FF:000001">
    <property type="entry name" value="Photosystem II reaction center protein Z"/>
    <property type="match status" value="1"/>
</dbReference>
<dbReference type="Gene3D" id="1.10.287.740">
    <property type="entry name" value="Photosystem II PsbZ, reaction centre"/>
    <property type="match status" value="1"/>
</dbReference>
<dbReference type="HAMAP" id="MF_00644">
    <property type="entry name" value="PSII_PsbZ"/>
    <property type="match status" value="1"/>
</dbReference>
<dbReference type="InterPro" id="IPR002644">
    <property type="entry name" value="PSII_PsbZ"/>
</dbReference>
<dbReference type="InterPro" id="IPR036512">
    <property type="entry name" value="PSII_PsbZ_sf"/>
</dbReference>
<dbReference type="NCBIfam" id="TIGR03043">
    <property type="entry name" value="PS_II_psbZ"/>
    <property type="match status" value="1"/>
</dbReference>
<dbReference type="PANTHER" id="PTHR34971">
    <property type="entry name" value="PHOTOSYSTEM II REACTION CENTER PROTEIN Z"/>
    <property type="match status" value="1"/>
</dbReference>
<dbReference type="PANTHER" id="PTHR34971:SF2">
    <property type="entry name" value="PHOTOSYSTEM II REACTION CENTER PROTEIN Z"/>
    <property type="match status" value="1"/>
</dbReference>
<dbReference type="Pfam" id="PF01737">
    <property type="entry name" value="Ycf9"/>
    <property type="match status" value="1"/>
</dbReference>
<dbReference type="SUPFAM" id="SSF161055">
    <property type="entry name" value="PsbZ-like"/>
    <property type="match status" value="1"/>
</dbReference>
<reference key="1">
    <citation type="journal article" date="2005" name="Am. J. Bot.">
        <title>The tortoise and the hare II: relative utility of 21 noncoding chloroplast DNA sequences for phylogenetic analysis.</title>
        <authorList>
            <person name="Shaw J."/>
            <person name="Lickey E.B."/>
            <person name="Beck J.T."/>
            <person name="Farmer S.B."/>
            <person name="Liu W."/>
            <person name="Miller J."/>
            <person name="Siripun K.C."/>
            <person name="Winder C.T."/>
            <person name="Schilling E.E."/>
            <person name="Small R.L."/>
        </authorList>
        <dbReference type="AGRICOLA" id="IND43689705"/>
    </citation>
    <scope>NUCLEOTIDE SEQUENCE [GENOMIC DNA]</scope>
</reference>
<reference key="2">
    <citation type="journal article" date="2006" name="BMC Evol. Biol.">
        <title>Complete plastid genome sequences of Drimys, Liriodendron, and Piper: implications for the phylogenetic relationships of magnoliids.</title>
        <authorList>
            <person name="Cai Z."/>
            <person name="Penaflor C."/>
            <person name="Kuehl J.V."/>
            <person name="Leebens-Mack J."/>
            <person name="Carlson J.E."/>
            <person name="dePamphilis C.W."/>
            <person name="Boore J.L."/>
            <person name="Jansen R.K."/>
        </authorList>
    </citation>
    <scope>NUCLEOTIDE SEQUENCE [LARGE SCALE GENOMIC DNA]</scope>
</reference>
<feature type="chain" id="PRO_0000217708" description="Photosystem II reaction center protein Z">
    <location>
        <begin position="1"/>
        <end position="62"/>
    </location>
</feature>
<feature type="transmembrane region" description="Helical" evidence="1">
    <location>
        <begin position="8"/>
        <end position="28"/>
    </location>
</feature>
<feature type="transmembrane region" description="Helical" evidence="1">
    <location>
        <begin position="41"/>
        <end position="61"/>
    </location>
</feature>
<geneLocation type="chloroplast"/>
<accession>Q5IHA9</accession>
<accession>Q0G9M2</accession>
<organism>
    <name type="scientific">Liriodendron tulipifera</name>
    <name type="common">Tuliptree</name>
    <name type="synonym">Tulip poplar</name>
    <dbReference type="NCBI Taxonomy" id="3415"/>
    <lineage>
        <taxon>Eukaryota</taxon>
        <taxon>Viridiplantae</taxon>
        <taxon>Streptophyta</taxon>
        <taxon>Embryophyta</taxon>
        <taxon>Tracheophyta</taxon>
        <taxon>Spermatophyta</taxon>
        <taxon>Magnoliopsida</taxon>
        <taxon>Magnoliidae</taxon>
        <taxon>Magnoliales</taxon>
        <taxon>Magnoliaceae</taxon>
        <taxon>Liriodendron</taxon>
    </lineage>
</organism>
<protein>
    <recommendedName>
        <fullName evidence="1">Photosystem II reaction center protein Z</fullName>
        <shortName evidence="1">PSII-Z</shortName>
    </recommendedName>
</protein>
<comment type="function">
    <text evidence="1">May control the interaction of photosystem II (PSII) cores with the light-harvesting antenna, regulates electron flow through the 2 photosystem reaction centers. PSII is a light-driven water plastoquinone oxidoreductase, using light energy to abstract electrons from H(2)O, generating a proton gradient subsequently used for ATP formation.</text>
</comment>
<comment type="subunit">
    <text evidence="1">PSII is composed of 1 copy each of membrane proteins PsbA, PsbB, PsbC, PsbD, PsbE, PsbF, PsbH, PsbI, PsbJ, PsbK, PsbL, PsbM, PsbT, PsbY, PsbZ, Psb30/Ycf12, at least 3 peripheral proteins of the oxygen-evolving complex and a large number of cofactors. It forms dimeric complexes.</text>
</comment>
<comment type="subcellular location">
    <subcellularLocation>
        <location evidence="1">Plastid</location>
        <location evidence="1">Chloroplast thylakoid membrane</location>
        <topology evidence="1">Multi-pass membrane protein</topology>
    </subcellularLocation>
</comment>
<comment type="similarity">
    <text evidence="1">Belongs to the PsbZ family.</text>
</comment>
<sequence length="62" mass="6531">MTIAFQLAVFALIATSSILLISVPVVFASSDGWSSNKNVVFSGTSLWIGLVFLVAILNSLIS</sequence>
<proteinExistence type="inferred from homology"/>
<gene>
    <name evidence="1" type="primary">psbZ</name>
</gene>
<evidence type="ECO:0000255" key="1">
    <source>
        <dbReference type="HAMAP-Rule" id="MF_00644"/>
    </source>
</evidence>
<name>PSBZ_LIRTU</name>